<gene>
    <name type="primary">ribC</name>
    <name type="ordered locus">BSU16670</name>
</gene>
<organism>
    <name type="scientific">Bacillus subtilis (strain 168)</name>
    <dbReference type="NCBI Taxonomy" id="224308"/>
    <lineage>
        <taxon>Bacteria</taxon>
        <taxon>Bacillati</taxon>
        <taxon>Bacillota</taxon>
        <taxon>Bacilli</taxon>
        <taxon>Bacillales</taxon>
        <taxon>Bacillaceae</taxon>
        <taxon>Bacillus</taxon>
    </lineage>
</organism>
<protein>
    <recommendedName>
        <fullName evidence="1">Bifunctional riboflavin kinase/FMN adenylyltransferase</fullName>
    </recommendedName>
    <alternativeName>
        <fullName evidence="1">Riboflavin biosynthesis protein RibF</fullName>
    </alternativeName>
    <domain>
        <recommendedName>
            <fullName evidence="1">Riboflavin kinase</fullName>
            <ecNumber evidence="1">2.7.1.26</ecNumber>
        </recommendedName>
        <alternativeName>
            <fullName evidence="1">Flavokinase</fullName>
        </alternativeName>
    </domain>
    <domain>
        <recommendedName>
            <fullName evidence="1">FMN adenylyltransferase</fullName>
            <ecNumber evidence="1">2.7.7.2</ecNumber>
        </recommendedName>
        <alternativeName>
            <fullName evidence="1">FAD pyrophosphorylase</fullName>
        </alternativeName>
        <alternativeName>
            <fullName evidence="1">FAD synthase</fullName>
        </alternativeName>
    </domain>
</protein>
<accession>P54575</accession>
<accession>P70987</accession>
<feature type="chain" id="PRO_0000194133" description="Bifunctional riboflavin kinase/FMN adenylyltransferase">
    <location>
        <begin position="1"/>
        <end position="316"/>
    </location>
</feature>
<feature type="sequence conflict" description="In Ref. 1; CAA64624." evidence="2" ref="1">
    <original>G</original>
    <variation>N</variation>
    <location>
        <position position="199"/>
    </location>
</feature>
<keyword id="KW-0067">ATP-binding</keyword>
<keyword id="KW-0274">FAD</keyword>
<keyword id="KW-0285">Flavoprotein</keyword>
<keyword id="KW-0288">FMN</keyword>
<keyword id="KW-0418">Kinase</keyword>
<keyword id="KW-0511">Multifunctional enzyme</keyword>
<keyword id="KW-0547">Nucleotide-binding</keyword>
<keyword id="KW-0548">Nucleotidyltransferase</keyword>
<keyword id="KW-1185">Reference proteome</keyword>
<keyword id="KW-0808">Transferase</keyword>
<proteinExistence type="inferred from homology"/>
<name>RIBC_BACSU</name>
<dbReference type="EC" id="2.7.1.26" evidence="1"/>
<dbReference type="EC" id="2.7.7.2" evidence="1"/>
<dbReference type="EMBL" id="X95312">
    <property type="protein sequence ID" value="CAA64624.1"/>
    <property type="molecule type" value="Genomic_DNA"/>
</dbReference>
<dbReference type="EMBL" id="Z80835">
    <property type="protein sequence ID" value="CAB02559.1"/>
    <property type="molecule type" value="Genomic_DNA"/>
</dbReference>
<dbReference type="EMBL" id="AL009126">
    <property type="protein sequence ID" value="CAB13540.1"/>
    <property type="molecule type" value="Genomic_DNA"/>
</dbReference>
<dbReference type="PIR" id="D69692">
    <property type="entry name" value="D69692"/>
</dbReference>
<dbReference type="RefSeq" id="NP_389549.1">
    <property type="nucleotide sequence ID" value="NC_000964.3"/>
</dbReference>
<dbReference type="SMR" id="P54575"/>
<dbReference type="FunCoup" id="P54575">
    <property type="interactions" value="548"/>
</dbReference>
<dbReference type="STRING" id="224308.BSU16670"/>
<dbReference type="MoonProt" id="P54575"/>
<dbReference type="PaxDb" id="224308-BSU16670"/>
<dbReference type="DNASU" id="938110"/>
<dbReference type="EnsemblBacteria" id="CAB13540">
    <property type="protein sequence ID" value="CAB13540"/>
    <property type="gene ID" value="BSU_16670"/>
</dbReference>
<dbReference type="GeneID" id="938110"/>
<dbReference type="KEGG" id="bsu:BSU16670"/>
<dbReference type="PATRIC" id="fig|224308.179.peg.1808"/>
<dbReference type="eggNOG" id="COG0196">
    <property type="taxonomic scope" value="Bacteria"/>
</dbReference>
<dbReference type="InParanoid" id="P54575"/>
<dbReference type="OrthoDB" id="9803667at2"/>
<dbReference type="PhylomeDB" id="P54575"/>
<dbReference type="BioCyc" id="BSUB:BSU16670-MONOMER"/>
<dbReference type="BioCyc" id="MetaCyc:MONOMER-14605"/>
<dbReference type="BRENDA" id="2.7.1.26">
    <property type="organism ID" value="658"/>
</dbReference>
<dbReference type="BRENDA" id="2.7.7.2">
    <property type="organism ID" value="658"/>
</dbReference>
<dbReference type="UniPathway" id="UPA00276">
    <property type="reaction ID" value="UER00406"/>
</dbReference>
<dbReference type="UniPathway" id="UPA00277">
    <property type="reaction ID" value="UER00407"/>
</dbReference>
<dbReference type="Proteomes" id="UP000001570">
    <property type="component" value="Chromosome"/>
</dbReference>
<dbReference type="GO" id="GO:0005524">
    <property type="term" value="F:ATP binding"/>
    <property type="evidence" value="ECO:0007669"/>
    <property type="project" value="UniProtKB-KW"/>
</dbReference>
<dbReference type="GO" id="GO:0003919">
    <property type="term" value="F:FMN adenylyltransferase activity"/>
    <property type="evidence" value="ECO:0007669"/>
    <property type="project" value="UniProtKB-EC"/>
</dbReference>
<dbReference type="GO" id="GO:0008531">
    <property type="term" value="F:riboflavin kinase activity"/>
    <property type="evidence" value="ECO:0000318"/>
    <property type="project" value="GO_Central"/>
</dbReference>
<dbReference type="GO" id="GO:0006747">
    <property type="term" value="P:FAD biosynthetic process"/>
    <property type="evidence" value="ECO:0007669"/>
    <property type="project" value="UniProtKB-UniPathway"/>
</dbReference>
<dbReference type="GO" id="GO:0009398">
    <property type="term" value="P:FMN biosynthetic process"/>
    <property type="evidence" value="ECO:0000318"/>
    <property type="project" value="GO_Central"/>
</dbReference>
<dbReference type="GO" id="GO:0009231">
    <property type="term" value="P:riboflavin biosynthetic process"/>
    <property type="evidence" value="ECO:0007669"/>
    <property type="project" value="InterPro"/>
</dbReference>
<dbReference type="GO" id="GO:0006771">
    <property type="term" value="P:riboflavin metabolic process"/>
    <property type="evidence" value="ECO:0000318"/>
    <property type="project" value="GO_Central"/>
</dbReference>
<dbReference type="CDD" id="cd02064">
    <property type="entry name" value="FAD_synthetase_N"/>
    <property type="match status" value="1"/>
</dbReference>
<dbReference type="FunFam" id="2.40.30.30:FF:000004">
    <property type="entry name" value="Riboflavin biosynthesis protein"/>
    <property type="match status" value="1"/>
</dbReference>
<dbReference type="FunFam" id="3.40.50.620:FF:000021">
    <property type="entry name" value="Riboflavin biosynthesis protein"/>
    <property type="match status" value="1"/>
</dbReference>
<dbReference type="Gene3D" id="3.40.50.620">
    <property type="entry name" value="HUPs"/>
    <property type="match status" value="1"/>
</dbReference>
<dbReference type="Gene3D" id="2.40.30.30">
    <property type="entry name" value="Riboflavin kinase-like"/>
    <property type="match status" value="1"/>
</dbReference>
<dbReference type="InterPro" id="IPR004821">
    <property type="entry name" value="Cyt_trans-like"/>
</dbReference>
<dbReference type="InterPro" id="IPR015864">
    <property type="entry name" value="FAD_synthase"/>
</dbReference>
<dbReference type="InterPro" id="IPR023468">
    <property type="entry name" value="Riboflavin_kinase"/>
</dbReference>
<dbReference type="InterPro" id="IPR002606">
    <property type="entry name" value="Riboflavin_kinase_bac"/>
</dbReference>
<dbReference type="InterPro" id="IPR015865">
    <property type="entry name" value="Riboflavin_kinase_bac/euk"/>
</dbReference>
<dbReference type="InterPro" id="IPR023465">
    <property type="entry name" value="Riboflavin_kinase_dom_sf"/>
</dbReference>
<dbReference type="InterPro" id="IPR014729">
    <property type="entry name" value="Rossmann-like_a/b/a_fold"/>
</dbReference>
<dbReference type="NCBIfam" id="TIGR00125">
    <property type="entry name" value="cyt_tran_rel"/>
    <property type="match status" value="1"/>
</dbReference>
<dbReference type="NCBIfam" id="NF004161">
    <property type="entry name" value="PRK05627.1-4"/>
    <property type="match status" value="1"/>
</dbReference>
<dbReference type="NCBIfam" id="NF004162">
    <property type="entry name" value="PRK05627.1-5"/>
    <property type="match status" value="1"/>
</dbReference>
<dbReference type="NCBIfam" id="TIGR00083">
    <property type="entry name" value="ribF"/>
    <property type="match status" value="1"/>
</dbReference>
<dbReference type="PANTHER" id="PTHR22749:SF6">
    <property type="entry name" value="RIBOFLAVIN KINASE"/>
    <property type="match status" value="1"/>
</dbReference>
<dbReference type="PANTHER" id="PTHR22749">
    <property type="entry name" value="RIBOFLAVIN KINASE/FMN ADENYLYLTRANSFERASE"/>
    <property type="match status" value="1"/>
</dbReference>
<dbReference type="Pfam" id="PF06574">
    <property type="entry name" value="FAD_syn"/>
    <property type="match status" value="1"/>
</dbReference>
<dbReference type="Pfam" id="PF01687">
    <property type="entry name" value="Flavokinase"/>
    <property type="match status" value="1"/>
</dbReference>
<dbReference type="PIRSF" id="PIRSF004491">
    <property type="entry name" value="FAD_Synth"/>
    <property type="match status" value="1"/>
</dbReference>
<dbReference type="SMART" id="SM00904">
    <property type="entry name" value="Flavokinase"/>
    <property type="match status" value="1"/>
</dbReference>
<dbReference type="SUPFAM" id="SSF52374">
    <property type="entry name" value="Nucleotidylyl transferase"/>
    <property type="match status" value="1"/>
</dbReference>
<dbReference type="SUPFAM" id="SSF82114">
    <property type="entry name" value="Riboflavin kinase-like"/>
    <property type="match status" value="1"/>
</dbReference>
<reference key="1">
    <citation type="journal article" date="1997" name="Mol. Biol. (Mosk.)">
        <title>Primary structure and functional activity of the Bacillus subtilis ribC gene.</title>
        <authorList>
            <person name="Gusarov I.I."/>
            <person name="Kreneva R.A."/>
            <person name="Rybak K.V."/>
            <person name="Podcherniaev D.A."/>
            <person name="Iomantas I.U.V."/>
            <person name="Kolibaba L.G."/>
            <person name="Polanuer B.M."/>
            <person name="Kozlov I.U.I."/>
            <person name="Perumov D.A."/>
        </authorList>
    </citation>
    <scope>NUCLEOTIDE SEQUENCE [GENOMIC DNA]</scope>
    <source>
        <strain>168</strain>
    </source>
</reference>
<reference key="2">
    <citation type="journal article" date="1997" name="Mol. Gen. Genet.">
        <title>Molecular cloning and characterisation of the ribC gene from Bacillus subtilis: a point mutation in ribC results in riboflavin overproduction.</title>
        <authorList>
            <person name="Coquard D."/>
            <person name="Huecas M."/>
            <person name="Ott M."/>
            <person name="van Dijl J.M."/>
            <person name="van Loon A.P."/>
            <person name="Hohmann H.P."/>
        </authorList>
    </citation>
    <scope>NUCLEOTIDE SEQUENCE [GENOMIC DNA]</scope>
    <source>
        <strain>168</strain>
    </source>
</reference>
<reference key="3">
    <citation type="journal article" date="1997" name="Nature">
        <title>The complete genome sequence of the Gram-positive bacterium Bacillus subtilis.</title>
        <authorList>
            <person name="Kunst F."/>
            <person name="Ogasawara N."/>
            <person name="Moszer I."/>
            <person name="Albertini A.M."/>
            <person name="Alloni G."/>
            <person name="Azevedo V."/>
            <person name="Bertero M.G."/>
            <person name="Bessieres P."/>
            <person name="Bolotin A."/>
            <person name="Borchert S."/>
            <person name="Borriss R."/>
            <person name="Boursier L."/>
            <person name="Brans A."/>
            <person name="Braun M."/>
            <person name="Brignell S.C."/>
            <person name="Bron S."/>
            <person name="Brouillet S."/>
            <person name="Bruschi C.V."/>
            <person name="Caldwell B."/>
            <person name="Capuano V."/>
            <person name="Carter N.M."/>
            <person name="Choi S.-K."/>
            <person name="Codani J.-J."/>
            <person name="Connerton I.F."/>
            <person name="Cummings N.J."/>
            <person name="Daniel R.A."/>
            <person name="Denizot F."/>
            <person name="Devine K.M."/>
            <person name="Duesterhoeft A."/>
            <person name="Ehrlich S.D."/>
            <person name="Emmerson P.T."/>
            <person name="Entian K.-D."/>
            <person name="Errington J."/>
            <person name="Fabret C."/>
            <person name="Ferrari E."/>
            <person name="Foulger D."/>
            <person name="Fritz C."/>
            <person name="Fujita M."/>
            <person name="Fujita Y."/>
            <person name="Fuma S."/>
            <person name="Galizzi A."/>
            <person name="Galleron N."/>
            <person name="Ghim S.-Y."/>
            <person name="Glaser P."/>
            <person name="Goffeau A."/>
            <person name="Golightly E.J."/>
            <person name="Grandi G."/>
            <person name="Guiseppi G."/>
            <person name="Guy B.J."/>
            <person name="Haga K."/>
            <person name="Haiech J."/>
            <person name="Harwood C.R."/>
            <person name="Henaut A."/>
            <person name="Hilbert H."/>
            <person name="Holsappel S."/>
            <person name="Hosono S."/>
            <person name="Hullo M.-F."/>
            <person name="Itaya M."/>
            <person name="Jones L.-M."/>
            <person name="Joris B."/>
            <person name="Karamata D."/>
            <person name="Kasahara Y."/>
            <person name="Klaerr-Blanchard M."/>
            <person name="Klein C."/>
            <person name="Kobayashi Y."/>
            <person name="Koetter P."/>
            <person name="Koningstein G."/>
            <person name="Krogh S."/>
            <person name="Kumano M."/>
            <person name="Kurita K."/>
            <person name="Lapidus A."/>
            <person name="Lardinois S."/>
            <person name="Lauber J."/>
            <person name="Lazarevic V."/>
            <person name="Lee S.-M."/>
            <person name="Levine A."/>
            <person name="Liu H."/>
            <person name="Masuda S."/>
            <person name="Mauel C."/>
            <person name="Medigue C."/>
            <person name="Medina N."/>
            <person name="Mellado R.P."/>
            <person name="Mizuno M."/>
            <person name="Moestl D."/>
            <person name="Nakai S."/>
            <person name="Noback M."/>
            <person name="Noone D."/>
            <person name="O'Reilly M."/>
            <person name="Ogawa K."/>
            <person name="Ogiwara A."/>
            <person name="Oudega B."/>
            <person name="Park S.-H."/>
            <person name="Parro V."/>
            <person name="Pohl T.M."/>
            <person name="Portetelle D."/>
            <person name="Porwollik S."/>
            <person name="Prescott A.M."/>
            <person name="Presecan E."/>
            <person name="Pujic P."/>
            <person name="Purnelle B."/>
            <person name="Rapoport G."/>
            <person name="Rey M."/>
            <person name="Reynolds S."/>
            <person name="Rieger M."/>
            <person name="Rivolta C."/>
            <person name="Rocha E."/>
            <person name="Roche B."/>
            <person name="Rose M."/>
            <person name="Sadaie Y."/>
            <person name="Sato T."/>
            <person name="Scanlan E."/>
            <person name="Schleich S."/>
            <person name="Schroeter R."/>
            <person name="Scoffone F."/>
            <person name="Sekiguchi J."/>
            <person name="Sekowska A."/>
            <person name="Seror S.J."/>
            <person name="Serror P."/>
            <person name="Shin B.-S."/>
            <person name="Soldo B."/>
            <person name="Sorokin A."/>
            <person name="Tacconi E."/>
            <person name="Takagi T."/>
            <person name="Takahashi H."/>
            <person name="Takemaru K."/>
            <person name="Takeuchi M."/>
            <person name="Tamakoshi A."/>
            <person name="Tanaka T."/>
            <person name="Terpstra P."/>
            <person name="Tognoni A."/>
            <person name="Tosato V."/>
            <person name="Uchiyama S."/>
            <person name="Vandenbol M."/>
            <person name="Vannier F."/>
            <person name="Vassarotti A."/>
            <person name="Viari A."/>
            <person name="Wambutt R."/>
            <person name="Wedler E."/>
            <person name="Wedler H."/>
            <person name="Weitzenegger T."/>
            <person name="Winters P."/>
            <person name="Wipat A."/>
            <person name="Yamamoto H."/>
            <person name="Yamane K."/>
            <person name="Yasumoto K."/>
            <person name="Yata K."/>
            <person name="Yoshida K."/>
            <person name="Yoshikawa H.-F."/>
            <person name="Zumstein E."/>
            <person name="Yoshikawa H."/>
            <person name="Danchin A."/>
        </authorList>
    </citation>
    <scope>NUCLEOTIDE SEQUENCE [LARGE SCALE GENOMIC DNA]</scope>
    <source>
        <strain>168</strain>
    </source>
</reference>
<sequence length="316" mass="35662">MKTIHITHPHHLIKEEQAKSVMALGYFDGVHLGHQKVIGTAKQIAEEKGLTLAVMTFHPHPSHVLGRDKEPKDLITPLEDKINQIEQLGTEVLYVVKFNEVFASLSPKQFIDQYIIGLNVQHAVAGFDFTYGKYGKGTMKTMPDDLDGKAGCTMVEKLTEQDKKISSSYIRTALQNGDVELANVLLGQPYFIKGIVIHGDKRGRTIGFPTANVGLNNSYIVPPTGVYAVKAEVNGEVYNGVCNIGYKPTFYEKRPEQPSIEVNLFDFNQEVYGAAIKIEWYKRIRSERKFNGIKELTEQIEKDKQEAIRYFSNLRK</sequence>
<evidence type="ECO:0000250" key="1">
    <source>
        <dbReference type="UniProtKB" id="Q59263"/>
    </source>
</evidence>
<evidence type="ECO:0000305" key="2"/>
<comment type="function">
    <text evidence="1">Catalyzes the phosphorylation of riboflavin to FMN followed by the adenylation of FMN to FAD.</text>
</comment>
<comment type="catalytic activity">
    <reaction evidence="1">
        <text>riboflavin + ATP = FMN + ADP + H(+)</text>
        <dbReference type="Rhea" id="RHEA:14357"/>
        <dbReference type="ChEBI" id="CHEBI:15378"/>
        <dbReference type="ChEBI" id="CHEBI:30616"/>
        <dbReference type="ChEBI" id="CHEBI:57986"/>
        <dbReference type="ChEBI" id="CHEBI:58210"/>
        <dbReference type="ChEBI" id="CHEBI:456216"/>
        <dbReference type="EC" id="2.7.1.26"/>
    </reaction>
</comment>
<comment type="catalytic activity">
    <reaction evidence="1">
        <text>FMN + ATP + H(+) = FAD + diphosphate</text>
        <dbReference type="Rhea" id="RHEA:17237"/>
        <dbReference type="ChEBI" id="CHEBI:15378"/>
        <dbReference type="ChEBI" id="CHEBI:30616"/>
        <dbReference type="ChEBI" id="CHEBI:33019"/>
        <dbReference type="ChEBI" id="CHEBI:57692"/>
        <dbReference type="ChEBI" id="CHEBI:58210"/>
        <dbReference type="EC" id="2.7.7.2"/>
    </reaction>
</comment>
<comment type="pathway">
    <text evidence="1">Cofactor biosynthesis; FAD biosynthesis; FAD from FMN: step 1/1.</text>
</comment>
<comment type="pathway">
    <text evidence="1">Cofactor biosynthesis; FMN biosynthesis; FMN from riboflavin (ATP route): step 1/1.</text>
</comment>
<comment type="similarity">
    <text evidence="2">Belongs to the RibF family.</text>
</comment>